<evidence type="ECO:0000250" key="1"/>
<evidence type="ECO:0000255" key="2"/>
<evidence type="ECO:0000255" key="3">
    <source>
        <dbReference type="PROSITE-ProRule" id="PRU00210"/>
    </source>
</evidence>
<evidence type="ECO:0000255" key="4">
    <source>
        <dbReference type="PROSITE-ProRule" id="PRU00350"/>
    </source>
</evidence>
<evidence type="ECO:0000269" key="5">
    <source>
    </source>
</evidence>
<evidence type="ECO:0000269" key="6">
    <source>
    </source>
</evidence>
<evidence type="ECO:0000269" key="7">
    <source>
    </source>
</evidence>
<evidence type="ECO:0000305" key="8"/>
<reference key="1">
    <citation type="journal article" date="2002" name="Mol. Vis.">
        <title>Expressed sequence tag analysis of human RPE/choroid for the NEIBank project: over 6000 non-redundant transcripts, novel genes and splice variants.</title>
        <authorList>
            <person name="Wistow G."/>
            <person name="Bernstein S.L."/>
            <person name="Wyatt M.K."/>
            <person name="Fariss R.N."/>
            <person name="Behal A."/>
            <person name="Touchman J.W."/>
            <person name="Bouffard G."/>
            <person name="Smith D."/>
            <person name="Peterson K."/>
        </authorList>
    </citation>
    <scope>NUCLEOTIDE SEQUENCE [MRNA]</scope>
    <scope>VARIANTS LEU-58 AND ARG-186</scope>
    <source>
        <tissue>Eye</tissue>
    </source>
</reference>
<reference key="2">
    <citation type="journal article" date="2004" name="Nat. Genet.">
        <title>Complete sequencing and characterization of 21,243 full-length human cDNAs.</title>
        <authorList>
            <person name="Ota T."/>
            <person name="Suzuki Y."/>
            <person name="Nishikawa T."/>
            <person name="Otsuki T."/>
            <person name="Sugiyama T."/>
            <person name="Irie R."/>
            <person name="Wakamatsu A."/>
            <person name="Hayashi K."/>
            <person name="Sato H."/>
            <person name="Nagai K."/>
            <person name="Kimura K."/>
            <person name="Makita H."/>
            <person name="Sekine M."/>
            <person name="Obayashi M."/>
            <person name="Nishi T."/>
            <person name="Shibahara T."/>
            <person name="Tanaka T."/>
            <person name="Ishii S."/>
            <person name="Yamamoto J."/>
            <person name="Saito K."/>
            <person name="Kawai Y."/>
            <person name="Isono Y."/>
            <person name="Nakamura Y."/>
            <person name="Nagahari K."/>
            <person name="Murakami K."/>
            <person name="Yasuda T."/>
            <person name="Iwayanagi T."/>
            <person name="Wagatsuma M."/>
            <person name="Shiratori A."/>
            <person name="Sudo H."/>
            <person name="Hosoiri T."/>
            <person name="Kaku Y."/>
            <person name="Kodaira H."/>
            <person name="Kondo H."/>
            <person name="Sugawara M."/>
            <person name="Takahashi M."/>
            <person name="Kanda K."/>
            <person name="Yokoi T."/>
            <person name="Furuya T."/>
            <person name="Kikkawa E."/>
            <person name="Omura Y."/>
            <person name="Abe K."/>
            <person name="Kamihara K."/>
            <person name="Katsuta N."/>
            <person name="Sato K."/>
            <person name="Tanikawa M."/>
            <person name="Yamazaki M."/>
            <person name="Ninomiya K."/>
            <person name="Ishibashi T."/>
            <person name="Yamashita H."/>
            <person name="Murakawa K."/>
            <person name="Fujimori K."/>
            <person name="Tanai H."/>
            <person name="Kimata M."/>
            <person name="Watanabe M."/>
            <person name="Hiraoka S."/>
            <person name="Chiba Y."/>
            <person name="Ishida S."/>
            <person name="Ono Y."/>
            <person name="Takiguchi S."/>
            <person name="Watanabe S."/>
            <person name="Yosida M."/>
            <person name="Hotuta T."/>
            <person name="Kusano J."/>
            <person name="Kanehori K."/>
            <person name="Takahashi-Fujii A."/>
            <person name="Hara H."/>
            <person name="Tanase T.-O."/>
            <person name="Nomura Y."/>
            <person name="Togiya S."/>
            <person name="Komai F."/>
            <person name="Hara R."/>
            <person name="Takeuchi K."/>
            <person name="Arita M."/>
            <person name="Imose N."/>
            <person name="Musashino K."/>
            <person name="Yuuki H."/>
            <person name="Oshima A."/>
            <person name="Sasaki N."/>
            <person name="Aotsuka S."/>
            <person name="Yoshikawa Y."/>
            <person name="Matsunawa H."/>
            <person name="Ichihara T."/>
            <person name="Shiohata N."/>
            <person name="Sano S."/>
            <person name="Moriya S."/>
            <person name="Momiyama H."/>
            <person name="Satoh N."/>
            <person name="Takami S."/>
            <person name="Terashima Y."/>
            <person name="Suzuki O."/>
            <person name="Nakagawa S."/>
            <person name="Senoh A."/>
            <person name="Mizoguchi H."/>
            <person name="Goto Y."/>
            <person name="Shimizu F."/>
            <person name="Wakebe H."/>
            <person name="Hishigaki H."/>
            <person name="Watanabe T."/>
            <person name="Sugiyama A."/>
            <person name="Takemoto M."/>
            <person name="Kawakami B."/>
            <person name="Yamazaki M."/>
            <person name="Watanabe K."/>
            <person name="Kumagai A."/>
            <person name="Itakura S."/>
            <person name="Fukuzumi Y."/>
            <person name="Fujimori Y."/>
            <person name="Komiyama M."/>
            <person name="Tashiro H."/>
            <person name="Tanigami A."/>
            <person name="Fujiwara T."/>
            <person name="Ono T."/>
            <person name="Yamada K."/>
            <person name="Fujii Y."/>
            <person name="Ozaki K."/>
            <person name="Hirao M."/>
            <person name="Ohmori Y."/>
            <person name="Kawabata A."/>
            <person name="Hikiji T."/>
            <person name="Kobatake N."/>
            <person name="Inagaki H."/>
            <person name="Ikema Y."/>
            <person name="Okamoto S."/>
            <person name="Okitani R."/>
            <person name="Kawakami T."/>
            <person name="Noguchi S."/>
            <person name="Itoh T."/>
            <person name="Shigeta K."/>
            <person name="Senba T."/>
            <person name="Matsumura K."/>
            <person name="Nakajima Y."/>
            <person name="Mizuno T."/>
            <person name="Morinaga M."/>
            <person name="Sasaki M."/>
            <person name="Togashi T."/>
            <person name="Oyama M."/>
            <person name="Hata H."/>
            <person name="Watanabe M."/>
            <person name="Komatsu T."/>
            <person name="Mizushima-Sugano J."/>
            <person name="Satoh T."/>
            <person name="Shirai Y."/>
            <person name="Takahashi Y."/>
            <person name="Nakagawa K."/>
            <person name="Okumura K."/>
            <person name="Nagase T."/>
            <person name="Nomura N."/>
            <person name="Kikuchi H."/>
            <person name="Masuho Y."/>
            <person name="Yamashita R."/>
            <person name="Nakai K."/>
            <person name="Yada T."/>
            <person name="Nakamura Y."/>
            <person name="Ohara O."/>
            <person name="Isogai T."/>
            <person name="Sugano S."/>
        </authorList>
    </citation>
    <scope>NUCLEOTIDE SEQUENCE [LARGE SCALE MRNA]</scope>
    <scope>VARIANT ARG-186</scope>
    <source>
        <tissue>Trachea</tissue>
    </source>
</reference>
<reference key="3">
    <citation type="journal article" date="2006" name="Nature">
        <title>DNA sequence and analysis of human chromosome 8.</title>
        <authorList>
            <person name="Nusbaum C."/>
            <person name="Mikkelsen T.S."/>
            <person name="Zody M.C."/>
            <person name="Asakawa S."/>
            <person name="Taudien S."/>
            <person name="Garber M."/>
            <person name="Kodira C.D."/>
            <person name="Schueler M.G."/>
            <person name="Shimizu A."/>
            <person name="Whittaker C.A."/>
            <person name="Chang J.L."/>
            <person name="Cuomo C.A."/>
            <person name="Dewar K."/>
            <person name="FitzGerald M.G."/>
            <person name="Yang X."/>
            <person name="Allen N.R."/>
            <person name="Anderson S."/>
            <person name="Asakawa T."/>
            <person name="Blechschmidt K."/>
            <person name="Bloom T."/>
            <person name="Borowsky M.L."/>
            <person name="Butler J."/>
            <person name="Cook A."/>
            <person name="Corum B."/>
            <person name="DeArellano K."/>
            <person name="DeCaprio D."/>
            <person name="Dooley K.T."/>
            <person name="Dorris L. III"/>
            <person name="Engels R."/>
            <person name="Gloeckner G."/>
            <person name="Hafez N."/>
            <person name="Hagopian D.S."/>
            <person name="Hall J.L."/>
            <person name="Ishikawa S.K."/>
            <person name="Jaffe D.B."/>
            <person name="Kamat A."/>
            <person name="Kudoh J."/>
            <person name="Lehmann R."/>
            <person name="Lokitsang T."/>
            <person name="Macdonald P."/>
            <person name="Major J.E."/>
            <person name="Matthews C.D."/>
            <person name="Mauceli E."/>
            <person name="Menzel U."/>
            <person name="Mihalev A.H."/>
            <person name="Minoshima S."/>
            <person name="Murayama Y."/>
            <person name="Naylor J.W."/>
            <person name="Nicol R."/>
            <person name="Nguyen C."/>
            <person name="O'Leary S.B."/>
            <person name="O'Neill K."/>
            <person name="Parker S.C.J."/>
            <person name="Polley A."/>
            <person name="Raymond C.K."/>
            <person name="Reichwald K."/>
            <person name="Rodriguez J."/>
            <person name="Sasaki T."/>
            <person name="Schilhabel M."/>
            <person name="Siddiqui R."/>
            <person name="Smith C.L."/>
            <person name="Sneddon T.P."/>
            <person name="Talamas J.A."/>
            <person name="Tenzin P."/>
            <person name="Topham K."/>
            <person name="Venkataraman V."/>
            <person name="Wen G."/>
            <person name="Yamazaki S."/>
            <person name="Young S.K."/>
            <person name="Zeng Q."/>
            <person name="Zimmer A.R."/>
            <person name="Rosenthal A."/>
            <person name="Birren B.W."/>
            <person name="Platzer M."/>
            <person name="Shimizu N."/>
            <person name="Lander E.S."/>
        </authorList>
    </citation>
    <scope>NUCLEOTIDE SEQUENCE [LARGE SCALE GENOMIC DNA]</scope>
</reference>
<reference key="4">
    <citation type="journal article" date="2004" name="Genome Res.">
        <title>The status, quality, and expansion of the NIH full-length cDNA project: the Mammalian Gene Collection (MGC).</title>
        <authorList>
            <consortium name="The MGC Project Team"/>
        </authorList>
    </citation>
    <scope>NUCLEOTIDE SEQUENCE [LARGE SCALE MRNA]</scope>
    <source>
        <tissue>Brain</tissue>
    </source>
</reference>
<reference key="5">
    <citation type="journal article" date="2010" name="Mol. Cell. Proteomics">
        <title>Proteomics characterization of extracellular space components in the human aorta.</title>
        <authorList>
            <person name="Didangelos A."/>
            <person name="Yin X."/>
            <person name="Mandal K."/>
            <person name="Baumert M."/>
            <person name="Jahangiri M."/>
            <person name="Mayr M."/>
        </authorList>
    </citation>
    <scope>TISSUE SPECIFICITY</scope>
    <scope>SUBCELLULAR LOCATION</scope>
</reference>
<gene>
    <name type="primary">SBSPON</name>
    <name type="synonym">C8orf84</name>
    <name type="synonym">RPESP</name>
</gene>
<protein>
    <recommendedName>
        <fullName>Somatomedin-B and thrombospondin type-1 domain-containing protein</fullName>
    </recommendedName>
    <alternativeName>
        <fullName>RPE-spondin</fullName>
    </alternativeName>
</protein>
<sequence>MRTLWMALCALSRLWPGAQAGCAEAGRCCPGRDPACFARGWRLDRVYGTCFCDQACRFTGDCCFDYDRACPARPCFVGEWSPWSGCADQCKPTTRVRRRSVQQEPQNGGAPCPPLEERAGCLEYSTPQGQDCGHTYVPAFITTSAFNKERTRQATSPHWSTHTEDAGYCMEFKTESLTPHCALENWPLTRWMQYLREGYTVCVDCQPPAMNSVSLRCSGDGLDSDGNQTLHWQAIGNPRCQGTWKKVRRVDQCSCPAVHSFIFI</sequence>
<feature type="signal peptide" evidence="2">
    <location>
        <begin position="1"/>
        <end position="20"/>
    </location>
</feature>
<feature type="chain" id="PRO_0000332158" description="Somatomedin-B and thrombospondin type-1 domain-containing protein">
    <location>
        <begin position="21"/>
        <end position="264"/>
    </location>
</feature>
<feature type="domain" description="SMB" evidence="4">
    <location>
        <begin position="24"/>
        <end position="75"/>
    </location>
</feature>
<feature type="domain" description="TSP type-1" evidence="3">
    <location>
        <begin position="74"/>
        <end position="127"/>
    </location>
</feature>
<feature type="glycosylation site" description="N-linked (GlcNAc...) asparagine" evidence="2">
    <location>
        <position position="227"/>
    </location>
</feature>
<feature type="disulfide bond" description="Alternate" evidence="4">
    <location>
        <begin position="28"/>
        <end position="52"/>
    </location>
</feature>
<feature type="disulfide bond" description="Alternate" evidence="4">
    <location>
        <begin position="28"/>
        <end position="36"/>
    </location>
</feature>
<feature type="disulfide bond" description="Alternate" evidence="4">
    <location>
        <begin position="36"/>
        <end position="70"/>
    </location>
</feature>
<feature type="disulfide bond" description="Alternate" evidence="4">
    <location>
        <begin position="50"/>
        <end position="63"/>
    </location>
</feature>
<feature type="disulfide bond" description="Alternate" evidence="4">
    <location>
        <begin position="50"/>
        <end position="52"/>
    </location>
</feature>
<feature type="disulfide bond" evidence="1">
    <location>
        <begin position="56"/>
        <end position="62"/>
    </location>
</feature>
<feature type="disulfide bond" description="Alternate" evidence="4">
    <location>
        <begin position="63"/>
        <end position="70"/>
    </location>
</feature>
<feature type="sequence variant" id="VAR_061914" description="In dbSNP:rs59331088." evidence="5">
    <original>F</original>
    <variation>L</variation>
    <location>
        <position position="58"/>
    </location>
</feature>
<feature type="sequence variant" id="VAR_042961" description="In dbSNP:rs2291219." evidence="5 6">
    <original>W</original>
    <variation>R</variation>
    <location>
        <position position="186"/>
    </location>
</feature>
<name>SBSPO_HUMAN</name>
<proteinExistence type="evidence at protein level"/>
<dbReference type="EMBL" id="AY040546">
    <property type="protein sequence ID" value="AAK83466.1"/>
    <property type="status" value="ALT_INIT"/>
    <property type="molecule type" value="mRNA"/>
</dbReference>
<dbReference type="EMBL" id="AK292970">
    <property type="protein sequence ID" value="BAF85659.1"/>
    <property type="status" value="ALT_INIT"/>
    <property type="molecule type" value="mRNA"/>
</dbReference>
<dbReference type="EMBL" id="AC022893">
    <property type="status" value="NOT_ANNOTATED_CDS"/>
    <property type="molecule type" value="Genomic_DNA"/>
</dbReference>
<dbReference type="EMBL" id="AC100823">
    <property type="status" value="NOT_ANNOTATED_CDS"/>
    <property type="molecule type" value="Genomic_DNA"/>
</dbReference>
<dbReference type="EMBL" id="BC042877">
    <property type="protein sequence ID" value="AAH42877.1"/>
    <property type="status" value="ALT_INIT"/>
    <property type="molecule type" value="mRNA"/>
</dbReference>
<dbReference type="CCDS" id="CCDS43747.2"/>
<dbReference type="RefSeq" id="NP_694957.3">
    <property type="nucleotide sequence ID" value="NM_153225.3"/>
</dbReference>
<dbReference type="SMR" id="Q8IVN8"/>
<dbReference type="BioGRID" id="127630">
    <property type="interactions" value="26"/>
</dbReference>
<dbReference type="FunCoup" id="Q8IVN8">
    <property type="interactions" value="29"/>
</dbReference>
<dbReference type="IntAct" id="Q8IVN8">
    <property type="interactions" value="3"/>
</dbReference>
<dbReference type="STRING" id="9606.ENSP00000297354"/>
<dbReference type="GlyConnect" id="1764">
    <property type="glycosylation" value="2 N-Linked glycans (1 site)"/>
</dbReference>
<dbReference type="GlyCosmos" id="Q8IVN8">
    <property type="glycosylation" value="1 site, 1 glycan"/>
</dbReference>
<dbReference type="GlyGen" id="Q8IVN8">
    <property type="glycosylation" value="3 sites, 44 N-linked glycans (1 site)"/>
</dbReference>
<dbReference type="iPTMnet" id="Q8IVN8"/>
<dbReference type="PhosphoSitePlus" id="Q8IVN8"/>
<dbReference type="BioMuta" id="SBSPON"/>
<dbReference type="DMDM" id="187611420"/>
<dbReference type="jPOST" id="Q8IVN8"/>
<dbReference type="MassIVE" id="Q8IVN8"/>
<dbReference type="PaxDb" id="9606-ENSP00000297354"/>
<dbReference type="PeptideAtlas" id="Q8IVN8"/>
<dbReference type="ProteomicsDB" id="70748"/>
<dbReference type="Antibodypedia" id="25155">
    <property type="antibodies" value="64 antibodies from 17 providers"/>
</dbReference>
<dbReference type="DNASU" id="157869"/>
<dbReference type="Ensembl" id="ENST00000297354.7">
    <property type="protein sequence ID" value="ENSP00000297354.6"/>
    <property type="gene ID" value="ENSG00000164764.11"/>
</dbReference>
<dbReference type="GeneID" id="157869"/>
<dbReference type="KEGG" id="hsa:157869"/>
<dbReference type="MANE-Select" id="ENST00000297354.7">
    <property type="protein sequence ID" value="ENSP00000297354.6"/>
    <property type="RefSeq nucleotide sequence ID" value="NM_153225.4"/>
    <property type="RefSeq protein sequence ID" value="NP_694957.3"/>
</dbReference>
<dbReference type="UCSC" id="uc003xzf.4">
    <property type="organism name" value="human"/>
</dbReference>
<dbReference type="AGR" id="HGNC:30362"/>
<dbReference type="CTD" id="157869"/>
<dbReference type="DisGeNET" id="157869"/>
<dbReference type="GeneCards" id="SBSPON"/>
<dbReference type="HGNC" id="HGNC:30362">
    <property type="gene designation" value="SBSPON"/>
</dbReference>
<dbReference type="HPA" id="ENSG00000164764">
    <property type="expression patterns" value="Low tissue specificity"/>
</dbReference>
<dbReference type="MIM" id="621005">
    <property type="type" value="gene"/>
</dbReference>
<dbReference type="neXtProt" id="NX_Q8IVN8"/>
<dbReference type="OpenTargets" id="ENSG00000164764"/>
<dbReference type="PharmGKB" id="PA164717487"/>
<dbReference type="VEuPathDB" id="HostDB:ENSG00000164764"/>
<dbReference type="eggNOG" id="ENOG502QV8I">
    <property type="taxonomic scope" value="Eukaryota"/>
</dbReference>
<dbReference type="GeneTree" id="ENSGT00390000008325"/>
<dbReference type="HOGENOM" id="CLU_058116_1_1_1"/>
<dbReference type="InParanoid" id="Q8IVN8"/>
<dbReference type="OMA" id="QAASPQW"/>
<dbReference type="OrthoDB" id="98591at2759"/>
<dbReference type="PAN-GO" id="Q8IVN8">
    <property type="GO annotations" value="0 GO annotations based on evolutionary models"/>
</dbReference>
<dbReference type="PhylomeDB" id="Q8IVN8"/>
<dbReference type="TreeFam" id="TF315634"/>
<dbReference type="PathwayCommons" id="Q8IVN8"/>
<dbReference type="Reactome" id="R-HSA-5083635">
    <property type="pathway name" value="Defective B3GALTL causes PpS"/>
</dbReference>
<dbReference type="Reactome" id="R-HSA-5173214">
    <property type="pathway name" value="O-glycosylation of TSR domain-containing proteins"/>
</dbReference>
<dbReference type="SignaLink" id="Q8IVN8"/>
<dbReference type="BioGRID-ORCS" id="157869">
    <property type="hits" value="14 hits in 1140 CRISPR screens"/>
</dbReference>
<dbReference type="ChiTaRS" id="SBSPON">
    <property type="organism name" value="human"/>
</dbReference>
<dbReference type="GenomeRNAi" id="157869"/>
<dbReference type="Pharos" id="Q8IVN8">
    <property type="development level" value="Tdark"/>
</dbReference>
<dbReference type="PRO" id="PR:Q8IVN8"/>
<dbReference type="Proteomes" id="UP000005640">
    <property type="component" value="Chromosome 8"/>
</dbReference>
<dbReference type="RNAct" id="Q8IVN8">
    <property type="molecule type" value="protein"/>
</dbReference>
<dbReference type="Bgee" id="ENSG00000164764">
    <property type="expression patterns" value="Expressed in germinal epithelium of ovary and 153 other cell types or tissues"/>
</dbReference>
<dbReference type="GO" id="GO:0062023">
    <property type="term" value="C:collagen-containing extracellular matrix"/>
    <property type="evidence" value="ECO:0007005"/>
    <property type="project" value="BHF-UCL"/>
</dbReference>
<dbReference type="GO" id="GO:0005576">
    <property type="term" value="C:extracellular region"/>
    <property type="evidence" value="ECO:0007669"/>
    <property type="project" value="UniProtKB-KW"/>
</dbReference>
<dbReference type="FunFam" id="2.20.100.10:FF:000091">
    <property type="entry name" value="Somatomedin B and thrombospondin type 1 domain containing"/>
    <property type="match status" value="1"/>
</dbReference>
<dbReference type="Gene3D" id="2.20.100.10">
    <property type="entry name" value="Thrombospondin type-1 (TSP1) repeat"/>
    <property type="match status" value="1"/>
</dbReference>
<dbReference type="InterPro" id="IPR039942">
    <property type="entry name" value="SBSPO"/>
</dbReference>
<dbReference type="InterPro" id="IPR056801">
    <property type="entry name" value="SBSPON_C"/>
</dbReference>
<dbReference type="InterPro" id="IPR036024">
    <property type="entry name" value="Somatomedin_B-like_dom_sf"/>
</dbReference>
<dbReference type="InterPro" id="IPR001212">
    <property type="entry name" value="Somatomedin_B_dom"/>
</dbReference>
<dbReference type="InterPro" id="IPR000884">
    <property type="entry name" value="TSP1_rpt"/>
</dbReference>
<dbReference type="InterPro" id="IPR036383">
    <property type="entry name" value="TSP1_rpt_sf"/>
</dbReference>
<dbReference type="InterPro" id="IPR044004">
    <property type="entry name" value="TSP1_spondin_dom"/>
</dbReference>
<dbReference type="PANTHER" id="PTHR20920">
    <property type="entry name" value="RPE-SPONDIN"/>
    <property type="match status" value="1"/>
</dbReference>
<dbReference type="PANTHER" id="PTHR20920:SF2">
    <property type="entry name" value="SOMATOMEDIN-B AND THROMBOSPONDIN TYPE-1 DOMAIN-CONTAINING PROTEIN"/>
    <property type="match status" value="1"/>
</dbReference>
<dbReference type="Pfam" id="PF25031">
    <property type="entry name" value="SBSPON_C"/>
    <property type="match status" value="1"/>
</dbReference>
<dbReference type="Pfam" id="PF19028">
    <property type="entry name" value="TSP1_spondin"/>
    <property type="match status" value="1"/>
</dbReference>
<dbReference type="SMART" id="SM00209">
    <property type="entry name" value="TSP1"/>
    <property type="match status" value="1"/>
</dbReference>
<dbReference type="SUPFAM" id="SSF90188">
    <property type="entry name" value="Somatomedin B domain"/>
    <property type="match status" value="1"/>
</dbReference>
<dbReference type="SUPFAM" id="SSF82895">
    <property type="entry name" value="TSP-1 type 1 repeat"/>
    <property type="match status" value="1"/>
</dbReference>
<dbReference type="PROSITE" id="PS00524">
    <property type="entry name" value="SMB_1"/>
    <property type="match status" value="1"/>
</dbReference>
<dbReference type="PROSITE" id="PS50958">
    <property type="entry name" value="SMB_2"/>
    <property type="match status" value="1"/>
</dbReference>
<dbReference type="PROSITE" id="PS50092">
    <property type="entry name" value="TSP1"/>
    <property type="match status" value="1"/>
</dbReference>
<accession>Q8IVN8</accession>
<accession>A8KAA5</accession>
<accession>Q96J64</accession>
<organism>
    <name type="scientific">Homo sapiens</name>
    <name type="common">Human</name>
    <dbReference type="NCBI Taxonomy" id="9606"/>
    <lineage>
        <taxon>Eukaryota</taxon>
        <taxon>Metazoa</taxon>
        <taxon>Chordata</taxon>
        <taxon>Craniata</taxon>
        <taxon>Vertebrata</taxon>
        <taxon>Euteleostomi</taxon>
        <taxon>Mammalia</taxon>
        <taxon>Eutheria</taxon>
        <taxon>Euarchontoglires</taxon>
        <taxon>Primates</taxon>
        <taxon>Haplorrhini</taxon>
        <taxon>Catarrhini</taxon>
        <taxon>Hominidae</taxon>
        <taxon>Homo</taxon>
    </lineage>
</organism>
<comment type="subcellular location">
    <subcellularLocation>
        <location evidence="7">Secreted</location>
        <location evidence="7">Extracellular space</location>
        <location evidence="7">Extracellular matrix</location>
    </subcellularLocation>
</comment>
<comment type="tissue specificity">
    <text evidence="7">Detected in aorta extracellular matrix (at protein level).</text>
</comment>
<comment type="similarity">
    <text evidence="8">Belongs to the thrombospondin family.</text>
</comment>
<comment type="sequence caution" evidence="8">
    <conflict type="erroneous initiation">
        <sequence resource="EMBL-CDS" id="AAH42877"/>
    </conflict>
    <text>Truncated N-terminus.</text>
</comment>
<comment type="sequence caution" evidence="8">
    <conflict type="erroneous initiation">
        <sequence resource="EMBL-CDS" id="AAK83466"/>
    </conflict>
    <text>Extended N-terminus.</text>
</comment>
<comment type="sequence caution" evidence="8">
    <conflict type="erroneous initiation">
        <sequence resource="EMBL-CDS" id="BAF85659"/>
    </conflict>
    <text>Truncated N-terminus.</text>
</comment>
<keyword id="KW-1015">Disulfide bond</keyword>
<keyword id="KW-0272">Extracellular matrix</keyword>
<keyword id="KW-0325">Glycoprotein</keyword>
<keyword id="KW-1267">Proteomics identification</keyword>
<keyword id="KW-1185">Reference proteome</keyword>
<keyword id="KW-0964">Secreted</keyword>
<keyword id="KW-0732">Signal</keyword>